<protein>
    <recommendedName>
        <fullName>UPF0423 protein BAB2_0840</fullName>
    </recommendedName>
</protein>
<reference key="1">
    <citation type="journal article" date="2005" name="Infect. Immun.">
        <title>Whole-genome analyses of speciation events in pathogenic Brucellae.</title>
        <authorList>
            <person name="Chain P.S."/>
            <person name="Comerci D.J."/>
            <person name="Tolmasky M.E."/>
            <person name="Larimer F.W."/>
            <person name="Malfatti S.A."/>
            <person name="Vergez L.M."/>
            <person name="Aguero F."/>
            <person name="Land M.L."/>
            <person name="Ugalde R.A."/>
            <person name="Garcia E."/>
        </authorList>
    </citation>
    <scope>NUCLEOTIDE SEQUENCE [LARGE SCALE GENOMIC DNA]</scope>
    <source>
        <strain>2308</strain>
    </source>
</reference>
<proteinExistence type="evidence at protein level"/>
<keyword id="KW-0002">3D-structure</keyword>
<keyword id="KW-1185">Reference proteome</keyword>
<keyword id="KW-0732">Signal</keyword>
<name>Y840_BRUA2</name>
<accession>Q2YK40</accession>
<evidence type="ECO:0000255" key="1"/>
<evidence type="ECO:0000305" key="2"/>
<organism>
    <name type="scientific">Brucella abortus (strain 2308)</name>
    <dbReference type="NCBI Taxonomy" id="359391"/>
    <lineage>
        <taxon>Bacteria</taxon>
        <taxon>Pseudomonadati</taxon>
        <taxon>Pseudomonadota</taxon>
        <taxon>Alphaproteobacteria</taxon>
        <taxon>Hyphomicrobiales</taxon>
        <taxon>Brucellaceae</taxon>
        <taxon>Brucella/Ochrobactrum group</taxon>
        <taxon>Brucella</taxon>
    </lineage>
</organism>
<gene>
    <name type="ordered locus">BAB2_0840</name>
</gene>
<comment type="similarity">
    <text evidence="2">Belongs to the UPF0423 family.</text>
</comment>
<dbReference type="EMBL" id="AM040265">
    <property type="protein sequence ID" value="CAJ13006.1"/>
    <property type="molecule type" value="Genomic_DNA"/>
</dbReference>
<dbReference type="RefSeq" id="WP_002966226.1">
    <property type="nucleotide sequence ID" value="NZ_KN046823.1"/>
</dbReference>
<dbReference type="PDB" id="8VV5">
    <property type="method" value="X-ray"/>
    <property type="resolution" value="1.84 A"/>
    <property type="chains" value="A/B/C/D=24-182"/>
</dbReference>
<dbReference type="PDB" id="8VV6">
    <property type="method" value="X-ray"/>
    <property type="resolution" value="1.55 A"/>
    <property type="chains" value="A/B/C/D=24-182"/>
</dbReference>
<dbReference type="PDBsum" id="8VV5"/>
<dbReference type="PDBsum" id="8VV6"/>
<dbReference type="SMR" id="Q2YK40"/>
<dbReference type="STRING" id="359391.BAB2_0840"/>
<dbReference type="KEGG" id="bmf:BAB2_0840"/>
<dbReference type="HOGENOM" id="CLU_100963_1_0_5"/>
<dbReference type="PhylomeDB" id="Q2YK40"/>
<dbReference type="BioCyc" id="MetaCyc:BAB_RS30325-MONOMER"/>
<dbReference type="Proteomes" id="UP000002719">
    <property type="component" value="Chromosome II"/>
</dbReference>
<dbReference type="Gene3D" id="2.60.40.2480">
    <property type="entry name" value="Periplasmic metal-binding protein Tp34-type"/>
    <property type="match status" value="1"/>
</dbReference>
<dbReference type="InterPro" id="IPR018470">
    <property type="entry name" value="Metal-bd_Tp34-typ"/>
</dbReference>
<dbReference type="InterPro" id="IPR038482">
    <property type="entry name" value="Tp34-type_sf"/>
</dbReference>
<dbReference type="Pfam" id="PF10634">
    <property type="entry name" value="Iron_transport"/>
    <property type="match status" value="1"/>
</dbReference>
<dbReference type="PIRSF" id="PIRSF017018">
    <property type="entry name" value="Tp34"/>
    <property type="match status" value="1"/>
</dbReference>
<sequence length="182" mass="19894">MKNLFRTAALMVPLSLALAYGAQAKEIPIGKPQLLGGMEIAAVYLQPIEMEPEGMMRPAKDSDVHLEADIKAAKDNTNGFAEGDWVPYLVVSYELTHLDNGKVQKGDFMPMVANDGPHYGDNVKLDGPGKYKLKLFVSPPSANQHAHFGRHVDKETGVGPWFKPVTAEYEFVYAGTGKKGAY</sequence>
<feature type="signal peptide" evidence="1">
    <location>
        <begin position="1"/>
        <end position="24"/>
    </location>
</feature>
<feature type="chain" id="PRO_0000284480" description="UPF0423 protein BAB2_0840">
    <location>
        <begin position="25"/>
        <end position="182"/>
    </location>
</feature>